<feature type="chain" id="PRO_0000103764" description="Uncharacterized protein Rv0966c">
    <location>
        <begin position="1"/>
        <end position="200"/>
    </location>
</feature>
<feature type="region of interest" description="Disordered" evidence="1">
    <location>
        <begin position="1"/>
        <end position="21"/>
    </location>
</feature>
<feature type="compositionally biased region" description="Basic and acidic residues" evidence="1">
    <location>
        <begin position="7"/>
        <end position="21"/>
    </location>
</feature>
<accession>P9WKM1</accession>
<accession>L0T5B3</accession>
<accession>P71544</accession>
<name>Y966_MYCTU</name>
<gene>
    <name type="ordered locus">Rv0966c</name>
    <name type="ORF">MTCY10D7.08</name>
</gene>
<comment type="induction">
    <text evidence="2">Highly up-regulated during the early stages of invasion of the human blood-brain barrier.</text>
</comment>
<organism>
    <name type="scientific">Mycobacterium tuberculosis (strain ATCC 25618 / H37Rv)</name>
    <dbReference type="NCBI Taxonomy" id="83332"/>
    <lineage>
        <taxon>Bacteria</taxon>
        <taxon>Bacillati</taxon>
        <taxon>Actinomycetota</taxon>
        <taxon>Actinomycetes</taxon>
        <taxon>Mycobacteriales</taxon>
        <taxon>Mycobacteriaceae</taxon>
        <taxon>Mycobacterium</taxon>
        <taxon>Mycobacterium tuberculosis complex</taxon>
    </lineage>
</organism>
<reference key="1">
    <citation type="journal article" date="1998" name="Nature">
        <title>Deciphering the biology of Mycobacterium tuberculosis from the complete genome sequence.</title>
        <authorList>
            <person name="Cole S.T."/>
            <person name="Brosch R."/>
            <person name="Parkhill J."/>
            <person name="Garnier T."/>
            <person name="Churcher C.M."/>
            <person name="Harris D.E."/>
            <person name="Gordon S.V."/>
            <person name="Eiglmeier K."/>
            <person name="Gas S."/>
            <person name="Barry C.E. III"/>
            <person name="Tekaia F."/>
            <person name="Badcock K."/>
            <person name="Basham D."/>
            <person name="Brown D."/>
            <person name="Chillingworth T."/>
            <person name="Connor R."/>
            <person name="Davies R.M."/>
            <person name="Devlin K."/>
            <person name="Feltwell T."/>
            <person name="Gentles S."/>
            <person name="Hamlin N."/>
            <person name="Holroyd S."/>
            <person name="Hornsby T."/>
            <person name="Jagels K."/>
            <person name="Krogh A."/>
            <person name="McLean J."/>
            <person name="Moule S."/>
            <person name="Murphy L.D."/>
            <person name="Oliver S."/>
            <person name="Osborne J."/>
            <person name="Quail M.A."/>
            <person name="Rajandream M.A."/>
            <person name="Rogers J."/>
            <person name="Rutter S."/>
            <person name="Seeger K."/>
            <person name="Skelton S."/>
            <person name="Squares S."/>
            <person name="Squares R."/>
            <person name="Sulston J.E."/>
            <person name="Taylor K."/>
            <person name="Whitehead S."/>
            <person name="Barrell B.G."/>
        </authorList>
    </citation>
    <scope>NUCLEOTIDE SEQUENCE [LARGE SCALE GENOMIC DNA]</scope>
    <source>
        <strain>ATCC 25618 / H37Rv</strain>
    </source>
</reference>
<reference key="2">
    <citation type="journal article" date="2006" name="J. Infect. Dis.">
        <title>Mycobacterium tuberculosis invasion and traversal across an in vitro human blood-brain barrier as a pathogenic mechanism for central nervous system tuberculosis.</title>
        <authorList>
            <person name="Jain S.K."/>
            <person name="Paul-Satyaseela M."/>
            <person name="Lamichhane G."/>
            <person name="Kim K.S."/>
            <person name="Bishai W.R."/>
        </authorList>
    </citation>
    <scope>INDUCTION</scope>
    <source>
        <strain>ATCC 25618 / H37Rv</strain>
    </source>
</reference>
<reference key="3">
    <citation type="journal article" date="2011" name="Mol. Cell. Proteomics">
        <title>Proteogenomic analysis of Mycobacterium tuberculosis by high resolution mass spectrometry.</title>
        <authorList>
            <person name="Kelkar D.S."/>
            <person name="Kumar D."/>
            <person name="Kumar P."/>
            <person name="Balakrishnan L."/>
            <person name="Muthusamy B."/>
            <person name="Yadav A.K."/>
            <person name="Shrivastava P."/>
            <person name="Marimuthu A."/>
            <person name="Anand S."/>
            <person name="Sundaram H."/>
            <person name="Kingsbury R."/>
            <person name="Harsha H.C."/>
            <person name="Nair B."/>
            <person name="Prasad T.S."/>
            <person name="Chauhan D.S."/>
            <person name="Katoch K."/>
            <person name="Katoch V.M."/>
            <person name="Kumar P."/>
            <person name="Chaerkady R."/>
            <person name="Ramachandran S."/>
            <person name="Dash D."/>
            <person name="Pandey A."/>
        </authorList>
    </citation>
    <scope>IDENTIFICATION BY MASS SPECTROMETRY [LARGE SCALE ANALYSIS]</scope>
    <source>
        <strain>ATCC 25618 / H37Rv</strain>
    </source>
</reference>
<dbReference type="EMBL" id="AL123456">
    <property type="protein sequence ID" value="CCP43715.1"/>
    <property type="molecule type" value="Genomic_DNA"/>
</dbReference>
<dbReference type="PIR" id="D70718">
    <property type="entry name" value="D70718"/>
</dbReference>
<dbReference type="RefSeq" id="NP_215481.2">
    <property type="nucleotide sequence ID" value="NC_000962.3"/>
</dbReference>
<dbReference type="RefSeq" id="WP_010886096.1">
    <property type="nucleotide sequence ID" value="NZ_NVQJ01000001.1"/>
</dbReference>
<dbReference type="SMR" id="P9WKM1"/>
<dbReference type="STRING" id="83332.Rv0966c"/>
<dbReference type="PaxDb" id="83332-Rv0966c"/>
<dbReference type="DNASU" id="885043"/>
<dbReference type="GeneID" id="885043"/>
<dbReference type="KEGG" id="mtu:Rv0966c"/>
<dbReference type="KEGG" id="mtv:RVBD_0966c"/>
<dbReference type="TubercuList" id="Rv0966c"/>
<dbReference type="eggNOG" id="COG4758">
    <property type="taxonomic scope" value="Bacteria"/>
</dbReference>
<dbReference type="InParanoid" id="P9WKM1"/>
<dbReference type="OrthoDB" id="3625082at2"/>
<dbReference type="PhylomeDB" id="P9WKM1"/>
<dbReference type="Proteomes" id="UP000001584">
    <property type="component" value="Chromosome"/>
</dbReference>
<dbReference type="GO" id="GO:0005886">
    <property type="term" value="C:plasma membrane"/>
    <property type="evidence" value="ECO:0007005"/>
    <property type="project" value="MTBBASE"/>
</dbReference>
<dbReference type="InterPro" id="IPR012551">
    <property type="entry name" value="DUF1707_SHOCT-like"/>
</dbReference>
<dbReference type="PANTHER" id="PTHR40763:SF4">
    <property type="entry name" value="DUF1707 DOMAIN-CONTAINING PROTEIN"/>
    <property type="match status" value="1"/>
</dbReference>
<dbReference type="PANTHER" id="PTHR40763">
    <property type="entry name" value="MEMBRANE PROTEIN-RELATED"/>
    <property type="match status" value="1"/>
</dbReference>
<dbReference type="Pfam" id="PF08044">
    <property type="entry name" value="DUF1707"/>
    <property type="match status" value="1"/>
</dbReference>
<proteinExistence type="evidence at protein level"/>
<keyword id="KW-1185">Reference proteome</keyword>
<sequence length="200" mass="22210">MSNSAQRDARNSRDESARASDTDRIQIAQLLAYAAEQGRLQLTDYEDRLARAYAATTYQELDRLRADLPGAAIGPRRGGECNPAPSTLLLALLGGFERRGRWNVPKKLTTFTLWGSGVLDLRYADFTSTEVDIRAYSIMGAQTILLPPEVNVEIHGHRVMGGFDRKVVGEGTRGVPTVRIRGFSLWGDVGIKRKPRKPRK</sequence>
<evidence type="ECO:0000256" key="1">
    <source>
        <dbReference type="SAM" id="MobiDB-lite"/>
    </source>
</evidence>
<evidence type="ECO:0000269" key="2">
    <source>
    </source>
</evidence>
<protein>
    <recommendedName>
        <fullName>Uncharacterized protein Rv0966c</fullName>
    </recommendedName>
</protein>